<protein>
    <recommendedName>
        <fullName>Cytochrome P450 4d1</fullName>
        <ecNumber>1.14.-.-</ecNumber>
    </recommendedName>
    <alternativeName>
        <fullName>CYPIVD1</fullName>
    </alternativeName>
</protein>
<proteinExistence type="inferred from homology"/>
<reference key="1">
    <citation type="submission" date="1997-08" db="EMBL/GenBank/DDBJ databases">
        <title>Evidence for non-neutral evolution around the cytochrome p450 gene cluster on the Drosophila melanogaster X chromosome.</title>
        <authorList>
            <person name="Phillips K.S."/>
            <person name="Begun D.J."/>
            <person name="Aquadro C.F."/>
        </authorList>
    </citation>
    <scope>NUCLEOTIDE SEQUENCE [GENOMIC DNA]</scope>
    <source>
        <strain>CAS-31</strain>
    </source>
</reference>
<name>CP4D1_DROSI</name>
<dbReference type="EC" id="1.14.-.-"/>
<dbReference type="EMBL" id="AF017005">
    <property type="protein sequence ID" value="AAB71168.1"/>
    <property type="molecule type" value="Genomic_DNA"/>
</dbReference>
<dbReference type="SMR" id="O16805"/>
<dbReference type="OrthoDB" id="1470350at2759"/>
<dbReference type="ChiTaRS" id="Cyp4d1">
    <property type="organism name" value="fly"/>
</dbReference>
<dbReference type="GO" id="GO:0005789">
    <property type="term" value="C:endoplasmic reticulum membrane"/>
    <property type="evidence" value="ECO:0007669"/>
    <property type="project" value="UniProtKB-SubCell"/>
</dbReference>
<dbReference type="GO" id="GO:0020037">
    <property type="term" value="F:heme binding"/>
    <property type="evidence" value="ECO:0007669"/>
    <property type="project" value="InterPro"/>
</dbReference>
<dbReference type="GO" id="GO:0005506">
    <property type="term" value="F:iron ion binding"/>
    <property type="evidence" value="ECO:0007669"/>
    <property type="project" value="InterPro"/>
</dbReference>
<dbReference type="GO" id="GO:0004497">
    <property type="term" value="F:monooxygenase activity"/>
    <property type="evidence" value="ECO:0007669"/>
    <property type="project" value="UniProtKB-KW"/>
</dbReference>
<dbReference type="GO" id="GO:0016705">
    <property type="term" value="F:oxidoreductase activity, acting on paired donors, with incorporation or reduction of molecular oxygen"/>
    <property type="evidence" value="ECO:0007669"/>
    <property type="project" value="InterPro"/>
</dbReference>
<dbReference type="CDD" id="cd20628">
    <property type="entry name" value="CYP4"/>
    <property type="match status" value="1"/>
</dbReference>
<dbReference type="FunFam" id="1.10.630.10:FF:000182">
    <property type="entry name" value="Cytochrome P450 3A4"/>
    <property type="match status" value="1"/>
</dbReference>
<dbReference type="Gene3D" id="1.10.630.10">
    <property type="entry name" value="Cytochrome P450"/>
    <property type="match status" value="1"/>
</dbReference>
<dbReference type="InterPro" id="IPR001128">
    <property type="entry name" value="Cyt_P450"/>
</dbReference>
<dbReference type="InterPro" id="IPR017972">
    <property type="entry name" value="Cyt_P450_CS"/>
</dbReference>
<dbReference type="InterPro" id="IPR002401">
    <property type="entry name" value="Cyt_P450_E_grp-I"/>
</dbReference>
<dbReference type="InterPro" id="IPR036396">
    <property type="entry name" value="Cyt_P450_sf"/>
</dbReference>
<dbReference type="InterPro" id="IPR050196">
    <property type="entry name" value="Cytochrome_P450_Monoox"/>
</dbReference>
<dbReference type="PANTHER" id="PTHR24291:SF203">
    <property type="entry name" value="CYTOCHROME P450 4D1-RELATED"/>
    <property type="match status" value="1"/>
</dbReference>
<dbReference type="PANTHER" id="PTHR24291">
    <property type="entry name" value="CYTOCHROME P450 FAMILY 4"/>
    <property type="match status" value="1"/>
</dbReference>
<dbReference type="Pfam" id="PF00067">
    <property type="entry name" value="p450"/>
    <property type="match status" value="1"/>
</dbReference>
<dbReference type="PRINTS" id="PR00463">
    <property type="entry name" value="EP450I"/>
</dbReference>
<dbReference type="PRINTS" id="PR00385">
    <property type="entry name" value="P450"/>
</dbReference>
<dbReference type="SUPFAM" id="SSF48264">
    <property type="entry name" value="Cytochrome P450"/>
    <property type="match status" value="1"/>
</dbReference>
<dbReference type="PROSITE" id="PS00086">
    <property type="entry name" value="CYTOCHROME_P450"/>
    <property type="match status" value="1"/>
</dbReference>
<comment type="function">
    <text evidence="1">Involved in the metabolism of insect hormones and in the breakdown of synthetic insecticides.</text>
</comment>
<comment type="cofactor">
    <cofactor evidence="1">
        <name>heme</name>
        <dbReference type="ChEBI" id="CHEBI:30413"/>
    </cofactor>
</comment>
<comment type="subcellular location">
    <subcellularLocation>
        <location>Endoplasmic reticulum membrane</location>
        <topology>Peripheral membrane protein</topology>
    </subcellularLocation>
    <subcellularLocation>
        <location>Microsome membrane</location>
        <topology>Peripheral membrane protein</topology>
    </subcellularLocation>
</comment>
<comment type="similarity">
    <text evidence="2">Belongs to the cytochrome P450 family.</text>
</comment>
<organism>
    <name type="scientific">Drosophila simulans</name>
    <name type="common">Fruit fly</name>
    <dbReference type="NCBI Taxonomy" id="7240"/>
    <lineage>
        <taxon>Eukaryota</taxon>
        <taxon>Metazoa</taxon>
        <taxon>Ecdysozoa</taxon>
        <taxon>Arthropoda</taxon>
        <taxon>Hexapoda</taxon>
        <taxon>Insecta</taxon>
        <taxon>Pterygota</taxon>
        <taxon>Neoptera</taxon>
        <taxon>Endopterygota</taxon>
        <taxon>Diptera</taxon>
        <taxon>Brachycera</taxon>
        <taxon>Muscomorpha</taxon>
        <taxon>Ephydroidea</taxon>
        <taxon>Drosophilidae</taxon>
        <taxon>Drosophila</taxon>
        <taxon>Sophophora</taxon>
    </lineage>
</organism>
<sequence length="512" mass="58624">MFLVIGAILAGALFVGLLLYQLKFKRLIDLISYMPGPPVLPLVGHGHHFIGKPPHEMVKKIFEFMETYSKDQVLKVWLGPELNVLMGNPKDVEVVLGTLRFNDKAGEYKALEPWLKEGLLVSRGRKWHKRRKIITPAFHFKILDQFVDVFEKGSRDLLRNMEQDRLKHGDSGFSLYDWINLCTMDTICETAMGVSINAQSNADSEYVQAVKTISMVLHKRMFNILYRFDLTYMLTPLARAEKKALNVLHQFTEKIIVQRREELIREGSSQESSKDDADVGAKRKMAFLDILLQSTVDERPLSNLDIREEVDTFMFEGHDTTSSALMFFFYNIATHPEAQKKCFEEIRSVVGNDKSTPVSYELLNQLHYVDLCVKETLRMYPSVPLLGRKVLEDCEINGKLIPAGTNIGISPLYLGRREELFSEPNSFKPERFDVVTTAEKLNPYAYIPFSAGPRNCIGQKFAMLEIKAIVANVLRHYEVDFVGDSSEPPVLIAELILRTKDPLMFKVRERVY</sequence>
<evidence type="ECO:0000250" key="1"/>
<evidence type="ECO:0000305" key="2"/>
<accession>O16805</accession>
<gene>
    <name type="primary">Cyp4d1</name>
</gene>
<keyword id="KW-0256">Endoplasmic reticulum</keyword>
<keyword id="KW-0349">Heme</keyword>
<keyword id="KW-0408">Iron</keyword>
<keyword id="KW-0472">Membrane</keyword>
<keyword id="KW-0479">Metal-binding</keyword>
<keyword id="KW-0492">Microsome</keyword>
<keyword id="KW-0503">Monooxygenase</keyword>
<keyword id="KW-0560">Oxidoreductase</keyword>
<feature type="chain" id="PRO_0000051833" description="Cytochrome P450 4d1">
    <location>
        <begin position="1"/>
        <end position="512"/>
    </location>
</feature>
<feature type="binding site" description="covalent" evidence="1">
    <location>
        <position position="316"/>
    </location>
    <ligand>
        <name>heme</name>
        <dbReference type="ChEBI" id="CHEBI:30413"/>
    </ligand>
</feature>
<feature type="binding site" description="axial binding residue" evidence="1">
    <location>
        <position position="456"/>
    </location>
    <ligand>
        <name>heme</name>
        <dbReference type="ChEBI" id="CHEBI:30413"/>
    </ligand>
    <ligandPart>
        <name>Fe</name>
        <dbReference type="ChEBI" id="CHEBI:18248"/>
    </ligandPart>
</feature>